<gene>
    <name type="primary">CLN5</name>
    <name evidence="18" type="synonym">BMPS</name>
</gene>
<keyword id="KW-0002">3D-structure</keyword>
<keyword id="KW-0225">Disease variant</keyword>
<keyword id="KW-1015">Disulfide bond</keyword>
<keyword id="KW-0887">Epilepsy</keyword>
<keyword id="KW-0325">Glycoprotein</keyword>
<keyword id="KW-0378">Hydrolase</keyword>
<keyword id="KW-0458">Lysosome</keyword>
<keyword id="KW-0472">Membrane</keyword>
<keyword id="KW-0523">Neurodegeneration</keyword>
<keyword id="KW-0525">Neuronal ceroid lipofuscinosis</keyword>
<keyword id="KW-1267">Proteomics identification</keyword>
<keyword id="KW-1185">Reference proteome</keyword>
<keyword id="KW-0735">Signal-anchor</keyword>
<keyword id="KW-0808">Transferase</keyword>
<keyword id="KW-0812">Transmembrane</keyword>
<keyword id="KW-1133">Transmembrane helix</keyword>
<reference key="1">
    <citation type="journal article" date="1998" name="Nat. Genet.">
        <title>CLN5, a novel gene encoding a putative transmembrane protein mutated in Finnish variant late infantile neuronal ceroid lipofuscinosis.</title>
        <authorList>
            <person name="Savukoski M."/>
            <person name="Klockars T."/>
            <person name="Holmberg V."/>
            <person name="Santavuori P."/>
            <person name="Lander E.S."/>
            <person name="Peltonen L."/>
        </authorList>
    </citation>
    <scope>NUCLEOTIDE SEQUENCE [MRNA]</scope>
    <scope>VARIANT CLN5 ASN-230</scope>
    <scope>VARIANT ARG-319</scope>
    <scope>TISSUE SPECIFICITY</scope>
    <source>
        <tissue>Fetal brain</tissue>
    </source>
</reference>
<reference key="2">
    <citation type="journal article" date="2004" name="Nat. Genet.">
        <title>Complete sequencing and characterization of 21,243 full-length human cDNAs.</title>
        <authorList>
            <person name="Ota T."/>
            <person name="Suzuki Y."/>
            <person name="Nishikawa T."/>
            <person name="Otsuki T."/>
            <person name="Sugiyama T."/>
            <person name="Irie R."/>
            <person name="Wakamatsu A."/>
            <person name="Hayashi K."/>
            <person name="Sato H."/>
            <person name="Nagai K."/>
            <person name="Kimura K."/>
            <person name="Makita H."/>
            <person name="Sekine M."/>
            <person name="Obayashi M."/>
            <person name="Nishi T."/>
            <person name="Shibahara T."/>
            <person name="Tanaka T."/>
            <person name="Ishii S."/>
            <person name="Yamamoto J."/>
            <person name="Saito K."/>
            <person name="Kawai Y."/>
            <person name="Isono Y."/>
            <person name="Nakamura Y."/>
            <person name="Nagahari K."/>
            <person name="Murakami K."/>
            <person name="Yasuda T."/>
            <person name="Iwayanagi T."/>
            <person name="Wagatsuma M."/>
            <person name="Shiratori A."/>
            <person name="Sudo H."/>
            <person name="Hosoiri T."/>
            <person name="Kaku Y."/>
            <person name="Kodaira H."/>
            <person name="Kondo H."/>
            <person name="Sugawara M."/>
            <person name="Takahashi M."/>
            <person name="Kanda K."/>
            <person name="Yokoi T."/>
            <person name="Furuya T."/>
            <person name="Kikkawa E."/>
            <person name="Omura Y."/>
            <person name="Abe K."/>
            <person name="Kamihara K."/>
            <person name="Katsuta N."/>
            <person name="Sato K."/>
            <person name="Tanikawa M."/>
            <person name="Yamazaki M."/>
            <person name="Ninomiya K."/>
            <person name="Ishibashi T."/>
            <person name="Yamashita H."/>
            <person name="Murakawa K."/>
            <person name="Fujimori K."/>
            <person name="Tanai H."/>
            <person name="Kimata M."/>
            <person name="Watanabe M."/>
            <person name="Hiraoka S."/>
            <person name="Chiba Y."/>
            <person name="Ishida S."/>
            <person name="Ono Y."/>
            <person name="Takiguchi S."/>
            <person name="Watanabe S."/>
            <person name="Yosida M."/>
            <person name="Hotuta T."/>
            <person name="Kusano J."/>
            <person name="Kanehori K."/>
            <person name="Takahashi-Fujii A."/>
            <person name="Hara H."/>
            <person name="Tanase T.-O."/>
            <person name="Nomura Y."/>
            <person name="Togiya S."/>
            <person name="Komai F."/>
            <person name="Hara R."/>
            <person name="Takeuchi K."/>
            <person name="Arita M."/>
            <person name="Imose N."/>
            <person name="Musashino K."/>
            <person name="Yuuki H."/>
            <person name="Oshima A."/>
            <person name="Sasaki N."/>
            <person name="Aotsuka S."/>
            <person name="Yoshikawa Y."/>
            <person name="Matsunawa H."/>
            <person name="Ichihara T."/>
            <person name="Shiohata N."/>
            <person name="Sano S."/>
            <person name="Moriya S."/>
            <person name="Momiyama H."/>
            <person name="Satoh N."/>
            <person name="Takami S."/>
            <person name="Terashima Y."/>
            <person name="Suzuki O."/>
            <person name="Nakagawa S."/>
            <person name="Senoh A."/>
            <person name="Mizoguchi H."/>
            <person name="Goto Y."/>
            <person name="Shimizu F."/>
            <person name="Wakebe H."/>
            <person name="Hishigaki H."/>
            <person name="Watanabe T."/>
            <person name="Sugiyama A."/>
            <person name="Takemoto M."/>
            <person name="Kawakami B."/>
            <person name="Yamazaki M."/>
            <person name="Watanabe K."/>
            <person name="Kumagai A."/>
            <person name="Itakura S."/>
            <person name="Fukuzumi Y."/>
            <person name="Fujimori Y."/>
            <person name="Komiyama M."/>
            <person name="Tashiro H."/>
            <person name="Tanigami A."/>
            <person name="Fujiwara T."/>
            <person name="Ono T."/>
            <person name="Yamada K."/>
            <person name="Fujii Y."/>
            <person name="Ozaki K."/>
            <person name="Hirao M."/>
            <person name="Ohmori Y."/>
            <person name="Kawabata A."/>
            <person name="Hikiji T."/>
            <person name="Kobatake N."/>
            <person name="Inagaki H."/>
            <person name="Ikema Y."/>
            <person name="Okamoto S."/>
            <person name="Okitani R."/>
            <person name="Kawakami T."/>
            <person name="Noguchi S."/>
            <person name="Itoh T."/>
            <person name="Shigeta K."/>
            <person name="Senba T."/>
            <person name="Matsumura K."/>
            <person name="Nakajima Y."/>
            <person name="Mizuno T."/>
            <person name="Morinaga M."/>
            <person name="Sasaki M."/>
            <person name="Togashi T."/>
            <person name="Oyama M."/>
            <person name="Hata H."/>
            <person name="Watanabe M."/>
            <person name="Komatsu T."/>
            <person name="Mizushima-Sugano J."/>
            <person name="Satoh T."/>
            <person name="Shirai Y."/>
            <person name="Takahashi Y."/>
            <person name="Nakagawa K."/>
            <person name="Okumura K."/>
            <person name="Nagase T."/>
            <person name="Nomura N."/>
            <person name="Kikuchi H."/>
            <person name="Masuho Y."/>
            <person name="Yamashita R."/>
            <person name="Nakai K."/>
            <person name="Yada T."/>
            <person name="Nakamura Y."/>
            <person name="Ohara O."/>
            <person name="Isogai T."/>
            <person name="Sugano S."/>
        </authorList>
    </citation>
    <scope>NUCLEOTIDE SEQUENCE [LARGE SCALE MRNA]</scope>
    <source>
        <tissue>Placenta</tissue>
    </source>
</reference>
<reference key="3">
    <citation type="journal article" date="2004" name="Nature">
        <title>The DNA sequence and analysis of human chromosome 13.</title>
        <authorList>
            <person name="Dunham A."/>
            <person name="Matthews L.H."/>
            <person name="Burton J."/>
            <person name="Ashurst J.L."/>
            <person name="Howe K.L."/>
            <person name="Ashcroft K.J."/>
            <person name="Beare D.M."/>
            <person name="Burford D.C."/>
            <person name="Hunt S.E."/>
            <person name="Griffiths-Jones S."/>
            <person name="Jones M.C."/>
            <person name="Keenan S.J."/>
            <person name="Oliver K."/>
            <person name="Scott C.E."/>
            <person name="Ainscough R."/>
            <person name="Almeida J.P."/>
            <person name="Ambrose K.D."/>
            <person name="Andrews D.T."/>
            <person name="Ashwell R.I.S."/>
            <person name="Babbage A.K."/>
            <person name="Bagguley C.L."/>
            <person name="Bailey J."/>
            <person name="Bannerjee R."/>
            <person name="Barlow K.F."/>
            <person name="Bates K."/>
            <person name="Beasley H."/>
            <person name="Bird C.P."/>
            <person name="Bray-Allen S."/>
            <person name="Brown A.J."/>
            <person name="Brown J.Y."/>
            <person name="Burrill W."/>
            <person name="Carder C."/>
            <person name="Carter N.P."/>
            <person name="Chapman J.C."/>
            <person name="Clamp M.E."/>
            <person name="Clark S.Y."/>
            <person name="Clarke G."/>
            <person name="Clee C.M."/>
            <person name="Clegg S.C."/>
            <person name="Cobley V."/>
            <person name="Collins J.E."/>
            <person name="Corby N."/>
            <person name="Coville G.J."/>
            <person name="Deloukas P."/>
            <person name="Dhami P."/>
            <person name="Dunham I."/>
            <person name="Dunn M."/>
            <person name="Earthrowl M.E."/>
            <person name="Ellington A.G."/>
            <person name="Faulkner L."/>
            <person name="Frankish A.G."/>
            <person name="Frankland J."/>
            <person name="French L."/>
            <person name="Garner P."/>
            <person name="Garnett J."/>
            <person name="Gilbert J.G.R."/>
            <person name="Gilson C.J."/>
            <person name="Ghori J."/>
            <person name="Grafham D.V."/>
            <person name="Gribble S.M."/>
            <person name="Griffiths C."/>
            <person name="Hall R.E."/>
            <person name="Hammond S."/>
            <person name="Harley J.L."/>
            <person name="Hart E.A."/>
            <person name="Heath P.D."/>
            <person name="Howden P.J."/>
            <person name="Huckle E.J."/>
            <person name="Hunt P.J."/>
            <person name="Hunt A.R."/>
            <person name="Johnson C."/>
            <person name="Johnson D."/>
            <person name="Kay M."/>
            <person name="Kimberley A.M."/>
            <person name="King A."/>
            <person name="Laird G.K."/>
            <person name="Langford C.J."/>
            <person name="Lawlor S."/>
            <person name="Leongamornlert D.A."/>
            <person name="Lloyd D.M."/>
            <person name="Lloyd C."/>
            <person name="Loveland J.E."/>
            <person name="Lovell J."/>
            <person name="Martin S."/>
            <person name="Mashreghi-Mohammadi M."/>
            <person name="McLaren S.J."/>
            <person name="McMurray A."/>
            <person name="Milne S."/>
            <person name="Moore M.J.F."/>
            <person name="Nickerson T."/>
            <person name="Palmer S.A."/>
            <person name="Pearce A.V."/>
            <person name="Peck A.I."/>
            <person name="Pelan S."/>
            <person name="Phillimore B."/>
            <person name="Porter K.M."/>
            <person name="Rice C.M."/>
            <person name="Searle S."/>
            <person name="Sehra H.K."/>
            <person name="Shownkeen R."/>
            <person name="Skuce C.D."/>
            <person name="Smith M."/>
            <person name="Steward C.A."/>
            <person name="Sycamore N."/>
            <person name="Tester J."/>
            <person name="Thomas D.W."/>
            <person name="Tracey A."/>
            <person name="Tromans A."/>
            <person name="Tubby B."/>
            <person name="Wall M."/>
            <person name="Wallis J.M."/>
            <person name="West A.P."/>
            <person name="Whitehead S.L."/>
            <person name="Willey D.L."/>
            <person name="Wilming L."/>
            <person name="Wray P.W."/>
            <person name="Wright M.W."/>
            <person name="Young L."/>
            <person name="Coulson A."/>
            <person name="Durbin R.M."/>
            <person name="Hubbard T."/>
            <person name="Sulston J.E."/>
            <person name="Beck S."/>
            <person name="Bentley D.R."/>
            <person name="Rogers J."/>
            <person name="Ross M.T."/>
        </authorList>
    </citation>
    <scope>NUCLEOTIDE SEQUENCE [LARGE SCALE GENOMIC DNA]</scope>
</reference>
<reference key="4">
    <citation type="journal article" date="2002" name="Hum. Mol. Genet.">
        <title>Lysosomal localization of the neuronal ceroid lipofuscinosis CLN5 protein.</title>
        <authorList>
            <person name="Isosomppi J."/>
            <person name="Vesa J."/>
            <person name="Jalanko A."/>
            <person name="Peltonen L."/>
        </authorList>
    </citation>
    <scope>SUBCELLULAR LOCATION</scope>
    <scope>GLYCOSYLATION</scope>
</reference>
<reference key="5">
    <citation type="journal article" date="2012" name="Mol. Cell. Biol.">
        <title>The role of ceroid lipofuscinosis neuronal protein 5 (CLN5) in endosomal sorting.</title>
        <authorList>
            <person name="Mamo A."/>
            <person name="Jules F."/>
            <person name="Dumaresq-Doiron K."/>
            <person name="Costantino S."/>
            <person name="Lefrancois S."/>
        </authorList>
    </citation>
    <scope>FUNCTION (SECRETED FORM)</scope>
    <scope>INTERACTION WITH SORT1; RAB5A AND RAB7A</scope>
    <scope>SUBCELLULAR LOCATION (SECRETED FORM)</scope>
</reference>
<reference key="6">
    <citation type="journal article" date="2017" name="Exp. Cell Res.">
        <title>CLN5 is cleaved by members of the SPP/SPPL family to produce a mature soluble protein.</title>
        <authorList>
            <person name="Jules F."/>
            <person name="Sauvageau E."/>
            <person name="Dumaresq-Doiron K."/>
            <person name="Mazzaferri J."/>
            <person name="Haug-Kroeper M."/>
            <person name="Fluhrer R."/>
            <person name="Costantino S."/>
            <person name="Lefrancois S."/>
        </authorList>
    </citation>
    <scope>PROTEOLYTIC PROCESSING BY SPPL3</scope>
    <scope>CLEAVAGE SITE</scope>
    <scope>SUBCELLULAR LOCATION</scope>
    <scope>TOPOLOGY</scope>
</reference>
<reference key="7">
    <citation type="journal article" date="2022" name="Sci. Adv.">
        <title>Cln5 represents a new type of cysteine-based S-depalmitoylase linked to neurodegeneration.</title>
        <authorList>
            <person name="Luebben A.V."/>
            <person name="Bender D."/>
            <person name="Becker S."/>
            <person name="Crowther L.M."/>
            <person name="Erven I."/>
            <person name="Hofmann K."/>
            <person name="Soeding J."/>
            <person name="Klemp H."/>
            <person name="Bellotti C."/>
            <person name="Staeuble A."/>
            <person name="Qiu T."/>
            <person name="Kathayat R.S."/>
            <person name="Dickinson B.C."/>
            <person name="Gaertner J."/>
            <person name="Sheldrick G.M."/>
            <person name="Kraetzner R."/>
            <person name="Steinfeld R."/>
        </authorList>
    </citation>
    <scope>X-RAY CRYSTALLOGRAPHY (2.7 ANGSTROMS) OF 1-358</scope>
    <scope>CHARACTERIZATION OF VARIANTS CLN5 ASP-209 AND ASN-230</scope>
    <scope>FUNCTION</scope>
    <scope>CATALYTIC ACTIVITY</scope>
    <scope>MUTAGENESIS OF VAL-101; ILE-115; HIS-117; CYS-231 AND ILE-259</scope>
    <scope>BIOPHYSICOCHEMICAL PROPERTIES</scope>
    <scope>ACTIVITY REGULATION</scope>
    <scope>GLYCOSYLATION AT ASN-130; ASN-143; ASN-203 AND ASN-255</scope>
    <scope>DISULFIDE BONDS</scope>
    <scope>REACTION MECHANISM</scope>
    <scope>ACTIVE SITE</scope>
</reference>
<reference key="8">
    <citation type="journal article" date="2005" name="Neurology">
        <title>A CLN5 mutation causing an atypical neuronal ceroid lipofuscinosis of juvenile onset.</title>
        <authorList>
            <person name="Pineda-Trujillo N."/>
            <person name="Cornejo W."/>
            <person name="Carrizosa J."/>
            <person name="Wheeler R.B."/>
            <person name="Munera S."/>
            <person name="Valencia A."/>
            <person name="Agudelo-Arango J."/>
            <person name="Cogollo A."/>
            <person name="Anderson G."/>
            <person name="Bedoya G."/>
            <person name="Mole S.E."/>
            <person name="Ruiz-Linares A."/>
        </authorList>
    </citation>
    <scope>VARIANT CLN5 HIS-63</scope>
</reference>
<reference key="9">
    <citation type="journal article" date="2006" name="Mol. Genet. Metab.">
        <title>Two novel CLN5 mutations in a Portuguese patient with vLINCL: insights into molecular mechanisms of CLN5 deficiency.</title>
        <authorList>
            <person name="Bessa C."/>
            <person name="Teixeira C.A."/>
            <person name="Mangas M."/>
            <person name="Dias A."/>
            <person name="Sa Miranda M.C."/>
            <person name="Guimaraes A."/>
            <person name="Ferreira J.C."/>
            <person name="Canas N."/>
            <person name="Cabral P."/>
            <person name="Ribeiro M.G."/>
        </authorList>
    </citation>
    <scope>VARIANTS CLN5 PRO-63 AND ASN-230</scope>
</reference>
<reference key="10">
    <citation type="journal article" date="2007" name="Neuropediatrics">
        <title>Revelation of a novel CLN5 mutation in early juvenile neuronal ceroid lipofuscinosis.</title>
        <authorList>
            <person name="Cannelli N."/>
            <person name="Nardocci N."/>
            <person name="Cassandrini D."/>
            <person name="Morbin M."/>
            <person name="Aiello C."/>
            <person name="Bugiani M."/>
            <person name="Criscuolo L."/>
            <person name="Zara F."/>
            <person name="Striano P."/>
            <person name="Granata T."/>
            <person name="Bertini E."/>
            <person name="Simonati A."/>
            <person name="Santorelli F.M."/>
        </authorList>
    </citation>
    <scope>VARIANT CLN5 ASP-209</scope>
</reference>
<reference key="11">
    <citation type="journal article" date="2009" name="Hum. Mutat.">
        <title>Retention of lysosomal protein CLN5 in the endoplasmic reticulum causes neuronal ceroid lipofuscinosis in Asian sibship.</title>
        <authorList>
            <person name="Lebrun A.-H."/>
            <person name="Storch S."/>
            <person name="Rueschendorf F."/>
            <person name="Schmiedt M.-L."/>
            <person name="Kyttaelae A."/>
            <person name="Mole S.E."/>
            <person name="Kitzmueller C."/>
            <person name="Saar K."/>
            <person name="Mewasingh L.D."/>
            <person name="Boda V."/>
            <person name="Kohlschuetter A."/>
            <person name="Ullrich K."/>
            <person name="Braulke T."/>
            <person name="Schulz A."/>
        </authorList>
    </citation>
    <scope>VARIANT CLN5 CYS-330</scope>
    <scope>CHARACTERIZATION OF VARIANT CLN5 CYS-330</scope>
</reference>
<reference key="12">
    <citation type="journal article" date="2010" name="Hum. Mutat.">
        <title>The neuronal ceroid lipofuscinosis protein CLN5: new insights into cellular maturation, transport, and consequences of mutations.</title>
        <authorList>
            <person name="Schmiedt M.L."/>
            <person name="Bessa C."/>
            <person name="Heine C."/>
            <person name="Ribeiro M.G."/>
            <person name="Jalanko A."/>
            <person name="Kyttaelae A."/>
        </authorList>
    </citation>
    <scope>CHARACTERIZATION OF VARIANTS CLN5 PRO-63; HIS-63 AND ASN-230</scope>
    <scope>PROTEOLYTIC CLEAVAGE</scope>
    <scope>SUBCELLULAR LOCATION (SECRETED FORM)</scope>
    <scope>GLYCOSYLATION</scope>
</reference>
<reference key="13">
    <citation type="journal article" date="2012" name="Hum. Mutat.">
        <title>Update of the mutation spectrum and clinical correlations of over 360 mutations in eight genes that underlie the neuronal ceroid lipofuscinoses.</title>
        <authorList>
            <person name="Kousi M."/>
            <person name="Lehesjoki A.E."/>
            <person name="Mole S.E."/>
        </authorList>
    </citation>
    <scope>VARIANTS CLN5 HIS-63; TYR-77; SER-143; PRO-149; SER-156; ARG-158; SER-158; ASP-209 AND CYS-325</scope>
    <scope>VARIANTS ARG-26 AND LYS-193</scope>
</reference>
<reference key="14">
    <citation type="journal article" date="2013" name="Hum. Mutat.">
        <title>Topology and membrane anchoring of the lysosomal storage disease-related protein CLN5.</title>
        <authorList>
            <person name="Larkin H."/>
            <person name="Ribeiro M.G."/>
            <person name="Lavoie C."/>
        </authorList>
    </citation>
    <scope>CHARACTERIZATION OF VARIANT CLN5 ASN-230</scope>
    <scope>SUBCELLULAR LOCATION (MEMBRANE FORM)</scope>
    <scope>TOPOLOGY</scope>
    <scope>PROTEOLYTIC CLEAVAGE</scope>
    <scope>GLYCOSYLATION</scope>
</reference>
<reference key="15">
    <citation type="journal article" date="2013" name="PLoS ONE">
        <title>The role of N-glycosylation in folding, trafficking, and functionality of lysosomal protein CLN5.</title>
        <authorList>
            <person name="Moharir A."/>
            <person name="Peck S.H."/>
            <person name="Budden T."/>
            <person name="Lee S.Y."/>
        </authorList>
    </citation>
    <scope>CHARACTERIZATION OF VARIANTS CLN5 SER-143 AND ASN-230</scope>
    <scope>GLYCOSYLATION AT ASN-130; ASN-143; ASN-178; ASN-203; ASN-255; ASN-271; ASN-281 AND ASN-352</scope>
    <scope>MUTAGENESIS OF ASN-130; ASN-143; ASN-178; ASN-203; ASN-255; ASN-271; ASN-281 AND ASN-352</scope>
    <scope>SUBCELLULAR LOCATION (SECRETED FORM)</scope>
</reference>
<reference key="16">
    <citation type="journal article" date="2015" name="Exp. Cell Res.">
        <title>Proteolytic processing of the neuronal ceroid lipofuscinosis related lysosomal protein CLN5.</title>
        <authorList>
            <person name="De Silva B."/>
            <person name="Adams J."/>
            <person name="Lee S.Y."/>
        </authorList>
    </citation>
    <scope>CHARACTERIZATION OF VARIANT CLN5 ASN-230</scope>
    <scope>PROTEOLYTIC CLEAVAGE AT C-TERMINUS</scope>
</reference>
<reference key="17">
    <citation type="journal article" date="2023" name="Science">
        <title>The Batten disease gene product CLN5 is the lysosomal bis(monoacylglycero)phosphate synthase.</title>
        <authorList>
            <person name="Medoh U.N."/>
            <person name="Hims A."/>
            <person name="Chen J.Y."/>
            <person name="Ghoochani A."/>
            <person name="Nyame K."/>
            <person name="Dong W."/>
            <person name="Abu-Remaileh M."/>
        </authorList>
    </citation>
    <scope>CHARACTERIZATION OF VARIANT CLN5 SER-143</scope>
    <scope>FUNCTION</scope>
    <scope>CATALYTIC ACTIVITY</scope>
    <scope>BIOPHYSICOCHEMICAL PROPERTIES</scope>
    <scope>ACTIVITY REGULATION</scope>
    <scope>SUBCELLULAR LOCATION</scope>
    <scope>SUBUNIT</scope>
    <scope>CIRCULAR DICHROISM</scope>
    <scope>MUTAGENESIS OF CYS-231 AND 318-HIS-LYS-319</scope>
    <scope>SUBSTRATE SPECIFICITY</scope>
    <scope>ACTIVE SITE</scope>
</reference>
<evidence type="ECO:0000250" key="1">
    <source>
        <dbReference type="UniProtKB" id="Q3UMW8"/>
    </source>
</evidence>
<evidence type="ECO:0000255" key="2"/>
<evidence type="ECO:0000269" key="3">
    <source>
    </source>
</evidence>
<evidence type="ECO:0000269" key="4">
    <source>
    </source>
</evidence>
<evidence type="ECO:0000269" key="5">
    <source>
    </source>
</evidence>
<evidence type="ECO:0000269" key="6">
    <source>
    </source>
</evidence>
<evidence type="ECO:0000269" key="7">
    <source>
    </source>
</evidence>
<evidence type="ECO:0000269" key="8">
    <source>
    </source>
</evidence>
<evidence type="ECO:0000269" key="9">
    <source>
    </source>
</evidence>
<evidence type="ECO:0000269" key="10">
    <source>
    </source>
</evidence>
<evidence type="ECO:0000269" key="11">
    <source>
    </source>
</evidence>
<evidence type="ECO:0000269" key="12">
    <source>
    </source>
</evidence>
<evidence type="ECO:0000269" key="13">
    <source>
    </source>
</evidence>
<evidence type="ECO:0000269" key="14">
    <source>
    </source>
</evidence>
<evidence type="ECO:0000269" key="15">
    <source>
    </source>
</evidence>
<evidence type="ECO:0000269" key="16">
    <source>
    </source>
</evidence>
<evidence type="ECO:0000269" key="17">
    <source>
    </source>
</evidence>
<evidence type="ECO:0000303" key="18">
    <source>
    </source>
</evidence>
<evidence type="ECO:0000305" key="19"/>
<evidence type="ECO:0000305" key="20">
    <source>
    </source>
</evidence>
<evidence type="ECO:0000305" key="21">
    <source>
    </source>
</evidence>
<evidence type="ECO:0007744" key="22">
    <source>
        <dbReference type="PDB" id="6R99"/>
    </source>
</evidence>
<accession>O75503</accession>
<accession>B3KQK7</accession>
<proteinExistence type="evidence at protein level"/>
<protein>
    <recommendedName>
        <fullName evidence="18">Bis(monoacylglycero)phosphate synthase CLN5</fullName>
        <shortName>BMP synthase CLN5</shortName>
        <ecNumber evidence="16">2.3.1.-</ecNumber>
    </recommendedName>
    <alternativeName>
        <fullName>Ceroid-lipofuscinosis neuronal protein 5</fullName>
        <shortName>Protein CLN5</shortName>
    </alternativeName>
    <alternativeName>
        <fullName>Palmitoyl protein thioesterase CLN5</fullName>
        <ecNumber evidence="15">3.1.2.22</ecNumber>
    </alternativeName>
    <alternativeName>
        <fullName>S-depalmitoylase CLN5</fullName>
    </alternativeName>
    <component>
        <recommendedName>
            <fullName>Bis(monoacylglycero)phosphate synthase CLN5, secreted form</fullName>
        </recommendedName>
    </component>
</protein>
<dbReference type="EC" id="2.3.1.-" evidence="16"/>
<dbReference type="EC" id="3.1.2.22" evidence="15"/>
<dbReference type="EMBL" id="AF068227">
    <property type="protein sequence ID" value="AAC27614.1"/>
    <property type="status" value="ALT_INIT"/>
    <property type="molecule type" value="mRNA"/>
</dbReference>
<dbReference type="EMBL" id="AK075109">
    <property type="protein sequence ID" value="BAG52069.1"/>
    <property type="molecule type" value="mRNA"/>
</dbReference>
<dbReference type="EMBL" id="AC001226">
    <property type="status" value="NOT_ANNOTATED_CDS"/>
    <property type="molecule type" value="Genomic_DNA"/>
</dbReference>
<dbReference type="CCDS" id="CCDS9456.2"/>
<dbReference type="RefSeq" id="NP_006484.2">
    <property type="nucleotide sequence ID" value="NM_006493.4"/>
</dbReference>
<dbReference type="PDB" id="6R99">
    <property type="method" value="X-ray"/>
    <property type="resolution" value="2.70 A"/>
    <property type="chains" value="A=1-358"/>
</dbReference>
<dbReference type="PDBsum" id="6R99"/>
<dbReference type="SMR" id="O75503"/>
<dbReference type="BioGRID" id="107614">
    <property type="interactions" value="85"/>
</dbReference>
<dbReference type="FunCoup" id="O75503">
    <property type="interactions" value="787"/>
</dbReference>
<dbReference type="IntAct" id="O75503">
    <property type="interactions" value="29"/>
</dbReference>
<dbReference type="MINT" id="O75503"/>
<dbReference type="STRING" id="9606.ENSP00000498772"/>
<dbReference type="GlyConnect" id="1108">
    <property type="glycosylation" value="17 N-Linked glycans (4 sites)"/>
</dbReference>
<dbReference type="GlyCosmos" id="O75503">
    <property type="glycosylation" value="8 sites, 16 glycans"/>
</dbReference>
<dbReference type="GlyGen" id="O75503">
    <property type="glycosylation" value="9 sites, 65 N-linked glycans (5 sites), 1 O-linked glycan (1 site)"/>
</dbReference>
<dbReference type="iPTMnet" id="O75503"/>
<dbReference type="PhosphoSitePlus" id="O75503"/>
<dbReference type="SwissPalm" id="O75503"/>
<dbReference type="BioMuta" id="CLN5"/>
<dbReference type="jPOST" id="O75503"/>
<dbReference type="MassIVE" id="O75503"/>
<dbReference type="PaxDb" id="9606-ENSP00000366673"/>
<dbReference type="PeptideAtlas" id="O75503"/>
<dbReference type="ProteomicsDB" id="50054"/>
<dbReference type="Pumba" id="O75503"/>
<dbReference type="Antibodypedia" id="50072">
    <property type="antibodies" value="171 antibodies from 24 providers"/>
</dbReference>
<dbReference type="DNASU" id="1203"/>
<dbReference type="Ensembl" id="ENST00000377453.9">
    <property type="protein sequence ID" value="ENSP00000366673.5"/>
    <property type="gene ID" value="ENSG00000102805.16"/>
</dbReference>
<dbReference type="Ensembl" id="ENST00000636183.2">
    <property type="protein sequence ID" value="ENSP00000490181.2"/>
    <property type="gene ID" value="ENSG00000102805.16"/>
</dbReference>
<dbReference type="GeneID" id="1203"/>
<dbReference type="KEGG" id="hsa:1203"/>
<dbReference type="MANE-Select" id="ENST00000377453.9">
    <property type="protein sequence ID" value="ENSP00000366673.5"/>
    <property type="RefSeq nucleotide sequence ID" value="NM_006493.4"/>
    <property type="RefSeq protein sequence ID" value="NP_006484.2"/>
</dbReference>
<dbReference type="UCSC" id="uc058xoc.1">
    <property type="organism name" value="human"/>
</dbReference>
<dbReference type="AGR" id="HGNC:2076"/>
<dbReference type="CTD" id="1203"/>
<dbReference type="DisGeNET" id="1203"/>
<dbReference type="GeneCards" id="CLN5"/>
<dbReference type="HGNC" id="HGNC:2076">
    <property type="gene designation" value="CLN5"/>
</dbReference>
<dbReference type="HPA" id="ENSG00000102805">
    <property type="expression patterns" value="Low tissue specificity"/>
</dbReference>
<dbReference type="MalaCards" id="CLN5"/>
<dbReference type="MIM" id="256731">
    <property type="type" value="phenotype"/>
</dbReference>
<dbReference type="MIM" id="608102">
    <property type="type" value="gene"/>
</dbReference>
<dbReference type="neXtProt" id="NX_O75503"/>
<dbReference type="OpenTargets" id="ENSG00000102805"/>
<dbReference type="Orphanet" id="228360">
    <property type="disease" value="CLN5 disease"/>
</dbReference>
<dbReference type="PharmGKB" id="PA26603"/>
<dbReference type="VEuPathDB" id="HostDB:ENSG00000102805"/>
<dbReference type="eggNOG" id="ENOG502QPQ5">
    <property type="taxonomic scope" value="Eukaryota"/>
</dbReference>
<dbReference type="GeneTree" id="ENSGT00390000010065"/>
<dbReference type="HOGENOM" id="CLU_050387_0_0_1"/>
<dbReference type="InParanoid" id="O75503"/>
<dbReference type="OMA" id="FRPHQSF"/>
<dbReference type="OrthoDB" id="10005881at2759"/>
<dbReference type="PAN-GO" id="O75503">
    <property type="GO annotations" value="3 GO annotations based on evolutionary models"/>
</dbReference>
<dbReference type="PhylomeDB" id="O75503"/>
<dbReference type="TreeFam" id="TF330864"/>
<dbReference type="PathwayCommons" id="O75503"/>
<dbReference type="SignaLink" id="O75503"/>
<dbReference type="BioGRID-ORCS" id="1203">
    <property type="hits" value="9 hits in 1149 CRISPR screens"/>
</dbReference>
<dbReference type="ChiTaRS" id="CLN5">
    <property type="organism name" value="human"/>
</dbReference>
<dbReference type="GeneWiki" id="CLN5"/>
<dbReference type="GenomeRNAi" id="1203"/>
<dbReference type="Pharos" id="O75503">
    <property type="development level" value="Tbio"/>
</dbReference>
<dbReference type="PRO" id="PR:O75503"/>
<dbReference type="Proteomes" id="UP000005640">
    <property type="component" value="Chromosome 13"/>
</dbReference>
<dbReference type="RNAct" id="O75503">
    <property type="molecule type" value="protein"/>
</dbReference>
<dbReference type="Bgee" id="ENSG00000102805">
    <property type="expression patterns" value="Expressed in left lobe of thyroid gland and 190 other cell types or tissues"/>
</dbReference>
<dbReference type="ExpressionAtlas" id="O75503">
    <property type="expression patterns" value="baseline and differential"/>
</dbReference>
<dbReference type="GO" id="GO:0005829">
    <property type="term" value="C:cytosol"/>
    <property type="evidence" value="ECO:0007669"/>
    <property type="project" value="GOC"/>
</dbReference>
<dbReference type="GO" id="GO:0005783">
    <property type="term" value="C:endoplasmic reticulum"/>
    <property type="evidence" value="ECO:0000314"/>
    <property type="project" value="UniProtKB"/>
</dbReference>
<dbReference type="GO" id="GO:0070062">
    <property type="term" value="C:extracellular exosome"/>
    <property type="evidence" value="ECO:0007005"/>
    <property type="project" value="UniProtKB"/>
</dbReference>
<dbReference type="GO" id="GO:0005794">
    <property type="term" value="C:Golgi apparatus"/>
    <property type="evidence" value="ECO:0000314"/>
    <property type="project" value="UniProtKB"/>
</dbReference>
<dbReference type="GO" id="GO:0005765">
    <property type="term" value="C:lysosomal membrane"/>
    <property type="evidence" value="ECO:0000314"/>
    <property type="project" value="UniProtKB"/>
</dbReference>
<dbReference type="GO" id="GO:0005764">
    <property type="term" value="C:lysosome"/>
    <property type="evidence" value="ECO:0000314"/>
    <property type="project" value="UniProtKB"/>
</dbReference>
<dbReference type="GO" id="GO:0016020">
    <property type="term" value="C:membrane"/>
    <property type="evidence" value="ECO:0000314"/>
    <property type="project" value="UniProtKB"/>
</dbReference>
<dbReference type="GO" id="GO:0048471">
    <property type="term" value="C:perinuclear region of cytoplasm"/>
    <property type="evidence" value="ECO:0000314"/>
    <property type="project" value="UniProtKB"/>
</dbReference>
<dbReference type="GO" id="GO:0005775">
    <property type="term" value="C:vacuolar lumen"/>
    <property type="evidence" value="ECO:0007669"/>
    <property type="project" value="Ensembl"/>
</dbReference>
<dbReference type="GO" id="GO:0160121">
    <property type="term" value="F:bis(monoacylglycero)phosphate synthase activity"/>
    <property type="evidence" value="ECO:0000314"/>
    <property type="project" value="UniProtKB"/>
</dbReference>
<dbReference type="GO" id="GO:0005537">
    <property type="term" value="F:D-mannose binding"/>
    <property type="evidence" value="ECO:0000314"/>
    <property type="project" value="UniProtKB"/>
</dbReference>
<dbReference type="GO" id="GO:0016798">
    <property type="term" value="F:hydrolase activity, acting on glycosyl bonds"/>
    <property type="evidence" value="ECO:0000318"/>
    <property type="project" value="GO_Central"/>
</dbReference>
<dbReference type="GO" id="GO:0052816">
    <property type="term" value="F:long-chain fatty acyl-CoA hydrolase activity"/>
    <property type="evidence" value="ECO:0000314"/>
    <property type="project" value="UniProtKB"/>
</dbReference>
<dbReference type="GO" id="GO:0007420">
    <property type="term" value="P:brain development"/>
    <property type="evidence" value="ECO:0000270"/>
    <property type="project" value="UniProtKB"/>
</dbReference>
<dbReference type="GO" id="GO:0070085">
    <property type="term" value="P:glycosylation"/>
    <property type="evidence" value="ECO:0000314"/>
    <property type="project" value="UniProtKB"/>
</dbReference>
<dbReference type="GO" id="GO:0007042">
    <property type="term" value="P:lysosomal lumen acidification"/>
    <property type="evidence" value="ECO:0000315"/>
    <property type="project" value="UniProtKB"/>
</dbReference>
<dbReference type="GO" id="GO:0007040">
    <property type="term" value="P:lysosome organization"/>
    <property type="evidence" value="ECO:0000318"/>
    <property type="project" value="GO_Central"/>
</dbReference>
<dbReference type="GO" id="GO:0022008">
    <property type="term" value="P:neurogenesis"/>
    <property type="evidence" value="ECO:0000270"/>
    <property type="project" value="UniProtKB"/>
</dbReference>
<dbReference type="GO" id="GO:0042551">
    <property type="term" value="P:neuron maturation"/>
    <property type="evidence" value="ECO:0000303"/>
    <property type="project" value="UniProtKB"/>
</dbReference>
<dbReference type="GO" id="GO:1904426">
    <property type="term" value="P:positive regulation of GTP binding"/>
    <property type="evidence" value="ECO:0000315"/>
    <property type="project" value="UniProtKB"/>
</dbReference>
<dbReference type="GO" id="GO:0030163">
    <property type="term" value="P:protein catabolic process"/>
    <property type="evidence" value="ECO:0000303"/>
    <property type="project" value="UniProtKB"/>
</dbReference>
<dbReference type="GO" id="GO:0042147">
    <property type="term" value="P:retrograde transport, endosome to Golgi"/>
    <property type="evidence" value="ECO:0000315"/>
    <property type="project" value="UniProtKB"/>
</dbReference>
<dbReference type="GO" id="GO:0006465">
    <property type="term" value="P:signal peptide processing"/>
    <property type="evidence" value="ECO:0000314"/>
    <property type="project" value="UniProtKB"/>
</dbReference>
<dbReference type="GO" id="GO:0007601">
    <property type="term" value="P:visual perception"/>
    <property type="evidence" value="ECO:0007669"/>
    <property type="project" value="Ensembl"/>
</dbReference>
<dbReference type="InterPro" id="IPR026138">
    <property type="entry name" value="CLN5"/>
</dbReference>
<dbReference type="PANTHER" id="PTHR15380:SF2">
    <property type="entry name" value="CEROID-LIPOFUSCINOSIS NEURONAL PROTEIN 5"/>
    <property type="match status" value="1"/>
</dbReference>
<dbReference type="PANTHER" id="PTHR15380">
    <property type="entry name" value="CEROID-LIPOFUSCINOSIS, NEURONAL 5"/>
    <property type="match status" value="1"/>
</dbReference>
<dbReference type="Pfam" id="PF15014">
    <property type="entry name" value="CLN5"/>
    <property type="match status" value="1"/>
</dbReference>
<comment type="function">
    <molecule>Bis(monoacylglycero)phosphate synthase CLN5, secreted form</molecule>
    <text evidence="10 16">Catalyzes the synthesis of bis(monoacylglycero)phosphate (BMP) via transacylation of 2 molecules of lysophosphatidylglycerol (LPG) (PubMed:37708259). BMP also known as lysobisphosphatidic acid plays a key role in the formation of intraluminal vesicles and in maintaining intracellular cholesterol homeostasis (PubMed:37708259). Can use only LPG as the exclusive lysophospholipid acyl donor for base exchange and displays BMP synthase activity towards various LPGs (LPG 14:0, LPG 16:0, LPG 18:0, LPG 18:1) with a higher preference for longer chain lengths (PubMed:37708259). Plays a role in influencing the retrograde trafficking of lysosomal sorting receptors SORT1 and IGF2R from the endosomes to the trans-Golgi network by controlling the recruitment of retromer complex to the endosomal membrane (PubMed:22431521). Regulates the localization and activation of RAB7A which is required to recruit the retromer complex to the endosomal membrane (PubMed:22431521).</text>
</comment>
<comment type="function">
    <text evidence="15">Exhibits palmitoyl protein thioesterase (S-depalmitoylation) activity in vitro and most likely plays a role in protein S-depalmitoylation.</text>
</comment>
<comment type="catalytic activity">
    <reaction evidence="15">
        <text>S-hexadecanoyl-L-cysteinyl-[protein] + H2O = L-cysteinyl-[protein] + hexadecanoate + H(+)</text>
        <dbReference type="Rhea" id="RHEA:19233"/>
        <dbReference type="Rhea" id="RHEA-COMP:10131"/>
        <dbReference type="Rhea" id="RHEA-COMP:11032"/>
        <dbReference type="ChEBI" id="CHEBI:7896"/>
        <dbReference type="ChEBI" id="CHEBI:15377"/>
        <dbReference type="ChEBI" id="CHEBI:15378"/>
        <dbReference type="ChEBI" id="CHEBI:29950"/>
        <dbReference type="ChEBI" id="CHEBI:74151"/>
        <dbReference type="EC" id="3.1.2.22"/>
    </reaction>
    <physiologicalReaction direction="left-to-right" evidence="20">
        <dbReference type="Rhea" id="RHEA:19234"/>
    </physiologicalReaction>
</comment>
<comment type="catalytic activity">
    <molecule>Bis(monoacylglycero)phosphate synthase CLN5, secreted form</molecule>
    <reaction evidence="16">
        <text>2 1-acyl-sn-glycero-3-phospho-(1'-sn-glycerol) = 1-acyl-sn-glycero-3-phospho-(3'-acyl-sn-1'-glycerol) + sn-glycero-3-phospho-(1'-sn-glycerol)</text>
        <dbReference type="Rhea" id="RHEA:77619"/>
        <dbReference type="ChEBI" id="CHEBI:64717"/>
        <dbReference type="ChEBI" id="CHEBI:64840"/>
        <dbReference type="ChEBI" id="CHEBI:232628"/>
    </reaction>
    <physiologicalReaction direction="left-to-right" evidence="16">
        <dbReference type="Rhea" id="RHEA:77620"/>
    </physiologicalReaction>
</comment>
<comment type="catalytic activity">
    <molecule>Bis(monoacylglycero)phosphate synthase CLN5, secreted form</molecule>
    <reaction evidence="16">
        <text>2 1-(9Z-octadecenoyl)-sn-glycero-3-phospho-(1'-sn-glycerol) = 1-(9Z-octadecenoyl)-sn-glycero-3-phospho-(3'-(9Z-octadecenoyl)-1'-sn-glycerol) + sn-glycero-3-phospho-(1'-sn-glycerol)</text>
        <dbReference type="Rhea" id="RHEA:77599"/>
        <dbReference type="ChEBI" id="CHEBI:64717"/>
        <dbReference type="ChEBI" id="CHEBI:72828"/>
        <dbReference type="ChEBI" id="CHEBI:232637"/>
    </reaction>
    <physiologicalReaction direction="left-to-right" evidence="16">
        <dbReference type="Rhea" id="RHEA:77600"/>
    </physiologicalReaction>
</comment>
<comment type="catalytic activity">
    <molecule>Bis(monoacylglycero)phosphate synthase CLN5, secreted form</molecule>
    <reaction evidence="16">
        <text>2 1-octadecanoyl-sn-glycero-3-phospho-(1'-sn-glycerol) = 1-octadecanoyl-sn-glycero-3-phospho-(3'-octadecanoyl-1'-sn-glycerol) + sn-glycero-3-phospho-(1'-sn-glycerol)</text>
        <dbReference type="Rhea" id="RHEA:77603"/>
        <dbReference type="ChEBI" id="CHEBI:64717"/>
        <dbReference type="ChEBI" id="CHEBI:72827"/>
        <dbReference type="ChEBI" id="CHEBI:232638"/>
    </reaction>
    <physiologicalReaction direction="left-to-right" evidence="16">
        <dbReference type="Rhea" id="RHEA:77604"/>
    </physiologicalReaction>
</comment>
<comment type="catalytic activity">
    <molecule>Bis(monoacylglycero)phosphate synthase CLN5, secreted form</molecule>
    <reaction evidence="16">
        <text>2 1-hexadecanoyl-sn-glycero-3-phospho-(1'-sn-glycerol) = 1-hexadecanoyl-sn-glycero-3-phospho-(3'-hexadecanoyl-1'-sn-glycerol) + sn-glycero-3-phospho-(1'-sn-glycerol)</text>
        <dbReference type="Rhea" id="RHEA:77607"/>
        <dbReference type="ChEBI" id="CHEBI:64717"/>
        <dbReference type="ChEBI" id="CHEBI:75158"/>
        <dbReference type="ChEBI" id="CHEBI:232639"/>
    </reaction>
    <physiologicalReaction direction="left-to-right" evidence="16">
        <dbReference type="Rhea" id="RHEA:77608"/>
    </physiologicalReaction>
</comment>
<comment type="catalytic activity">
    <molecule>Bis(monoacylglycero)phosphate synthase CLN5, secreted form</molecule>
    <reaction evidence="16">
        <text>2 1-tetradecanoyl-sn-glycero-3-phospho-(1'-sn-glycerol) = 1-tetradecanoyl-sn-glycero-3-phospho-(3'-tetradecanoyl-1'-sn-glycerol) + sn-glycero-3-phospho-(1'-sn-glycerol)</text>
        <dbReference type="Rhea" id="RHEA:77611"/>
        <dbReference type="ChEBI" id="CHEBI:64717"/>
        <dbReference type="ChEBI" id="CHEBI:72826"/>
        <dbReference type="ChEBI" id="CHEBI:232640"/>
    </reaction>
    <physiologicalReaction direction="left-to-right" evidence="16">
        <dbReference type="Rhea" id="RHEA:77612"/>
    </physiologicalReaction>
</comment>
<comment type="activity regulation">
    <text evidence="15 16">Anionic phospholipids activate bis(monoacylglycero)phosphate (BMP) synthase activity (PubMed:37708259). Amiodarone, a cationic amphiphilic drug inhibits BMP synthase activity towards liposomal lysophosphatidylglycerol (PubMed:37708259). Palmostatin B inhibits palmitoyl protein thioesterase activity (PubMed:35427157).</text>
</comment>
<comment type="biophysicochemical properties">
    <kinetics>
        <KM evidence="16">1.3 uM for lysophosphatidylglycerol 18:1 (at pH 5)</KM>
        <KM evidence="16">4.752 uM for lysophosphatidylglycerol 18:1 (at pH 6.5)</KM>
    </kinetics>
    <phDependence>
        <text evidence="15 16">Optimum pH is 6.5 for bis(monoacylglycero)phosphate synthase activity (PubMed:37708259). Optimum pH of 6.5 and 8.5 is seen for palmitoyl thioesterase activity (PubMed:35427157).</text>
    </phDependence>
    <temperatureDependence>
        <text evidence="16">Thermostable.</text>
    </temperatureDependence>
</comment>
<comment type="subunit">
    <text evidence="1 10 16">Multimer (PubMed:37708259). Interacts with SORT1, RAB5A and RAB7A (PubMed:22431521). Interacts with PPT1, TPP1, CLN3, CLN6, CLN8, ATP5F1A and ATP5F1B (By similarity).</text>
</comment>
<comment type="interaction">
    <interactant intactId="EBI-1043514">
        <id>O75503</id>
    </interactant>
    <interactant intactId="EBI-3248760">
        <id>Q13286</id>
        <label>CLN3</label>
    </interactant>
    <organismsDiffer>false</organismsDiffer>
    <experiments>2</experiments>
</comment>
<comment type="interaction">
    <interactant intactId="EBI-1043514">
        <id>O75503</id>
    </interactant>
    <interactant intactId="EBI-714550">
        <id>P37268</id>
        <label>FDFT1</label>
    </interactant>
    <organismsDiffer>false</organismsDiffer>
    <experiments>3</experiments>
</comment>
<comment type="interaction">
    <interactant intactId="EBI-1043514">
        <id>O75503</id>
    </interactant>
    <interactant intactId="EBI-13345167">
        <id>Q8TDT2</id>
        <label>GPR152</label>
    </interactant>
    <organismsDiffer>false</organismsDiffer>
    <experiments>3</experiments>
</comment>
<comment type="interaction">
    <interactant intactId="EBI-1043514">
        <id>O75503</id>
    </interactant>
    <interactant intactId="EBI-13334485">
        <id>P01344-3</id>
        <label>IGF2</label>
    </interactant>
    <organismsDiffer>false</organismsDiffer>
    <experiments>3</experiments>
</comment>
<comment type="interaction">
    <interactant intactId="EBI-1043514">
        <id>O75503</id>
    </interactant>
    <interactant intactId="EBI-11721828">
        <id>Q8IY26</id>
        <label>PLPP6</label>
    </interactant>
    <organismsDiffer>false</organismsDiffer>
    <experiments>3</experiments>
</comment>
<comment type="interaction">
    <interactant intactId="EBI-1043514">
        <id>O75503</id>
    </interactant>
    <interactant intactId="EBI-12266234">
        <id>Q8IVJ1</id>
        <label>SLC41A1</label>
    </interactant>
    <organismsDiffer>false</organismsDiffer>
    <experiments>3</experiments>
</comment>
<comment type="interaction">
    <interactant intactId="EBI-1043514">
        <id>O75503</id>
    </interactant>
    <interactant intactId="EBI-10290130">
        <id>Q96JW4</id>
        <label>SLC41A2</label>
    </interactant>
    <organismsDiffer>false</organismsDiffer>
    <experiments>3</experiments>
</comment>
<comment type="subcellular location">
    <molecule>Bis(monoacylglycero)phosphate synthase CLN5, secreted form</molecule>
    <subcellularLocation>
        <location evidence="3 8 10 11 12 14 16">Lysosome</location>
    </subcellularLocation>
</comment>
<comment type="subcellular location">
    <molecule>Bis(monoacylglycero)phosphate synthase CLN5</molecule>
    <subcellularLocation>
        <location evidence="11 14">Membrane</location>
        <topology evidence="11 14">Single-pass type II membrane protein</topology>
    </subcellularLocation>
    <text evidence="11">An amphipathic anchor region facilitates its association with the membrane.</text>
</comment>
<comment type="tissue specificity">
    <text evidence="17">Ubiquitous.</text>
</comment>
<comment type="PTM">
    <text evidence="3 8 11 12 16">N-glycosylated with both high mannose and complex type sugars. Glycosylation is important for proper folding and trafficking to the lysosomes.</text>
</comment>
<comment type="PTM">
    <molecule>Bis(monoacylglycero)phosphate synthase CLN5</molecule>
    <text evidence="8 11 14">The type II membrane signal anchor is proteolytically cleaved to produce a mature form that is transported to the lysosomes (Bis(monoacylglycero)phosphate synthase CLN5, secreted form) (PubMed:20052765, PubMed:24038957, PubMed:28442266).</text>
</comment>
<comment type="PTM">
    <text evidence="13">Can undergo proteolytic cleavage at the C-terminus, probably by a cysteine protease and may involve the removal of approximately 10-15 residues from the C-terminal end (PubMed:26342652).</text>
</comment>
<comment type="disease" evidence="4 5 6 7 8 9 11 12 13 15 16 17">
    <disease id="DI-00813">
        <name>Ceroid lipofuscinosis, neuronal, 5</name>
        <acronym>CLN5</acronym>
        <description>A form of neuronal ceroid lipofuscinosis. Neuronal ceroid lipofuscinoses are progressive neurodegenerative, lysosomal storage diseases characterized by intracellular accumulation of autofluorescent liposomal material, and clinically by seizures, dementia, visual loss, and/or cerebral atrophy. The lipopigment patterns observed most often in neuronal ceroid lipofuscinosis type 5 comprise mixed combinations of granular, curvilinear, and fingerprint profiles.</description>
        <dbReference type="MIM" id="256731"/>
    </disease>
    <text>The disease is caused by variants affecting the gene represented in this entry.</text>
</comment>
<comment type="similarity">
    <text evidence="19">Belongs to the CLN5 family.</text>
</comment>
<comment type="sequence caution" evidence="19">
    <conflict type="erroneous initiation">
        <sequence resource="EMBL-CDS" id="AAC27614"/>
    </conflict>
    <text>Extended N-terminus.</text>
</comment>
<comment type="online information" name="NCL CLN5">
    <link uri="https://www.ucl.ac.uk/ncl-disease/ncl-resource-gateway-batten-disease"/>
    <text>Neural Ceroid Lipofuscinoses mutation db</text>
</comment>
<organism>
    <name type="scientific">Homo sapiens</name>
    <name type="common">Human</name>
    <dbReference type="NCBI Taxonomy" id="9606"/>
    <lineage>
        <taxon>Eukaryota</taxon>
        <taxon>Metazoa</taxon>
        <taxon>Chordata</taxon>
        <taxon>Craniata</taxon>
        <taxon>Vertebrata</taxon>
        <taxon>Euteleostomi</taxon>
        <taxon>Mammalia</taxon>
        <taxon>Eutheria</taxon>
        <taxon>Euarchontoglires</taxon>
        <taxon>Primates</taxon>
        <taxon>Haplorrhini</taxon>
        <taxon>Catarrhini</taxon>
        <taxon>Hominidae</taxon>
        <taxon>Homo</taxon>
    </lineage>
</organism>
<name>CLN5_HUMAN</name>
<sequence>MAQEVDTAQGAEMRRGAGAARGRASWCWALALLWLAVVPGWSRVSGIPSRRHWPVPYKRFDFRPKPDPYCQAKYTFCPTGSPIPVMEGDDDIEVFRLQAPVWEFKYGDLLGHLKIMHDAIGFRSTLTGKNYTMEWYELFQLGNCTFPHLRPEMDAPFWCNQGAACFFEGIDDVHWKENGTLVQVATISGNMFNQMAKWVKQDNETGIYYETWNVKASPEKGAETWFDSYDCSKFVLRTFNKLAEFGAEFKNIETNYTRIFLYSGEPTYLGNETSVFGPTGNKTLGLAIKRFYYPFKPHLPTKEFLLSLLQIFDAVIVHKQFYLFYNFEYWFLPMKFPFIKITYEEIPLPIRNKTLSGL</sequence>
<feature type="chain" id="PRO_0000089860" description="Bis(monoacylglycero)phosphate synthase CLN5">
    <location>
        <begin position="1"/>
        <end position="358"/>
    </location>
</feature>
<feature type="chain" id="PRO_0000438009" description="Bis(monoacylglycero)phosphate synthase CLN5, secreted form">
    <location>
        <begin position="44"/>
        <end position="358"/>
    </location>
</feature>
<feature type="topological domain" description="Cytoplasmic" evidence="11">
    <location>
        <begin position="1"/>
        <end position="23"/>
    </location>
</feature>
<feature type="transmembrane region" description="Helical; Signal-anchor for type II membrane protein" evidence="2">
    <location>
        <begin position="24"/>
        <end position="40"/>
    </location>
</feature>
<feature type="topological domain" description="Lumenal" evidence="11">
    <location>
        <begin position="41"/>
        <end position="358"/>
    </location>
</feature>
<feature type="region of interest" description="Membrane-anchoring" evidence="11">
    <location>
        <begin position="304"/>
        <end position="343"/>
    </location>
</feature>
<feature type="active site" description="Proton acceptor" evidence="20">
    <location>
        <position position="117"/>
    </location>
</feature>
<feature type="active site" description="Nucleophile; Acyl-thioester intermediate" evidence="20 21">
    <location>
        <position position="231"/>
    </location>
</feature>
<feature type="site" description="Cleavage; by SPPL3" evidence="14">
    <location>
        <begin position="43"/>
        <end position="44"/>
    </location>
</feature>
<feature type="glycosylation site" description="N-linked (GlcNAc...) asparagine" evidence="12 15 22">
    <location>
        <position position="130"/>
    </location>
</feature>
<feature type="glycosylation site" description="N-linked (GlcNAc...) asparagine" evidence="12 15 22">
    <location>
        <position position="143"/>
    </location>
</feature>
<feature type="glycosylation site" description="N-linked (GlcNAc...) asparagine" evidence="12">
    <location>
        <position position="178"/>
    </location>
</feature>
<feature type="glycosylation site" description="N-linked (GlcNAc...) asparagine" evidence="12 15 22">
    <location>
        <position position="203"/>
    </location>
</feature>
<feature type="glycosylation site" description="N-linked (GlcNAc...) asparagine" evidence="12 15 22">
    <location>
        <position position="255"/>
    </location>
</feature>
<feature type="glycosylation site" description="N-linked (GlcNAc...) asparagine" evidence="12">
    <location>
        <position position="271"/>
    </location>
</feature>
<feature type="glycosylation site" description="N-linked (GlcNAc...) asparagine" evidence="12">
    <location>
        <position position="281"/>
    </location>
</feature>
<feature type="glycosylation site" description="N-linked (GlcNAc...) asparagine" evidence="12">
    <location>
        <position position="352"/>
    </location>
</feature>
<feature type="disulfide bond" evidence="15">
    <location>
        <begin position="70"/>
        <end position="159"/>
    </location>
</feature>
<feature type="disulfide bond" evidence="15">
    <location>
        <begin position="77"/>
        <end position="165"/>
    </location>
</feature>
<feature type="sequence variant" id="VAR_066895" description="In dbSNP:rs199727787." evidence="9">
    <original>W</original>
    <variation>R</variation>
    <location>
        <position position="26"/>
    </location>
</feature>
<feature type="sequence variant" id="VAR_042700" description="In CLN5; retained in the endoplasmic reticulum rather than reaching the lysosome; dbSNP:rs104894386." evidence="4 8 9">
    <original>R</original>
    <variation>H</variation>
    <location>
        <position position="63"/>
    </location>
</feature>
<feature type="sequence variant" id="VAR_042702" description="In CLN5; Retained in the endoplasmic reticulum rather than reaching the lysosome; dbSNP:rs104894386." evidence="5 8">
    <original>R</original>
    <variation>P</variation>
    <location>
        <position position="63"/>
    </location>
</feature>
<feature type="sequence variant" id="VAR_066896" description="In CLN5; dbSNP:rs267606738." evidence="9">
    <original>C</original>
    <variation>Y</variation>
    <location>
        <position position="77"/>
    </location>
</feature>
<feature type="sequence variant" id="VAR_066897" description="In CLN5; loss of glycosylation; effectively transported to the lysosome; significant loss of bis(monoacylglycero)phosphate synthase activity; no alterations in secondary structure and thermal stability; dbSNP:rs386833975." evidence="9 12">
    <original>N</original>
    <variation>S</variation>
    <location>
        <position position="143"/>
    </location>
</feature>
<feature type="sequence variant" id="VAR_066898" description="In CLN5; dbSNP:rs386833976." evidence="9">
    <original>L</original>
    <variation>P</variation>
    <location>
        <position position="149"/>
    </location>
</feature>
<feature type="sequence variant" id="VAR_066899" description="In CLN5; dbSNP:rs386833977." evidence="9">
    <original>P</original>
    <variation>S</variation>
    <location>
        <position position="156"/>
    </location>
</feature>
<feature type="sequence variant" id="VAR_066900" description="In CLN5; dbSNP:rs147065248." evidence="9">
    <original>W</original>
    <variation>R</variation>
    <location>
        <position position="158"/>
    </location>
</feature>
<feature type="sequence variant" id="VAR_066901" description="In CLN5; dbSNP:rs386833978." evidence="9">
    <original>W</original>
    <variation>S</variation>
    <location>
        <position position="158"/>
    </location>
</feature>
<feature type="sequence variant" id="VAR_066902" description="In dbSNP:rs138611001." evidence="9">
    <original>N</original>
    <variation>K</variation>
    <location>
        <position position="193"/>
    </location>
</feature>
<feature type="sequence variant" id="VAR_042701" description="In CLN5; significant decrease in palmitoyl protein thioesterase activity; dbSNP:rs386833981." evidence="6 9 15">
    <original>Y</original>
    <variation>D</variation>
    <location>
        <position position="209"/>
    </location>
</feature>
<feature type="sequence variant" id="VAR_059031" description="In dbSNP:rs11842935.">
    <original>E</original>
    <variation>A</variation>
    <location>
        <position position="219"/>
    </location>
</feature>
<feature type="sequence variant" id="VAR_005137" description="In CLN5; creates a new N-glycosylation site; retained in the endoplasmic reticulum rather than reaching the lysosome; significant decrease in palmitoyl protein thioesterase activity; dbSNP:rs28940280." evidence="5 8 11 12 13 15 17">
    <original>D</original>
    <variation>N</variation>
    <location>
        <position position="230"/>
    </location>
</feature>
<feature type="sequence variant" id="VAR_005138" description="In dbSNP:rs1800209." evidence="17">
    <original>K</original>
    <variation>R</variation>
    <location>
        <position position="319"/>
    </location>
</feature>
<feature type="sequence variant" id="VAR_066903" description="In CLN5; dbSNP:rs148862100." evidence="9">
    <original>Y</original>
    <variation>C</variation>
    <location>
        <position position="325"/>
    </location>
</feature>
<feature type="sequence variant" id="VAR_059032" description="In CLN5; retained in the endoplasmic reticulum rather than reaching the lysosome; dbSNP:rs386833968." evidence="7">
    <original>W</original>
    <variation>C</variation>
    <location>
        <position position="330"/>
    </location>
</feature>
<feature type="mutagenesis site" description="Significant decrease in palmitoyl protein thioesterase activity." evidence="15">
    <original>V</original>
    <variation>S</variation>
    <location>
        <position position="101"/>
    </location>
</feature>
<feature type="mutagenesis site" description="Significant decrease in palmitoyl protein thioesterase activity." evidence="15">
    <original>I</original>
    <variation>S</variation>
    <location>
        <position position="115"/>
    </location>
</feature>
<feature type="mutagenesis site" description="Significant decrease in palmitoyl protein thioesterase activity." evidence="15">
    <original>H</original>
    <variation>A</variation>
    <location>
        <position position="117"/>
    </location>
</feature>
<feature type="mutagenesis site" description="Loss of glycosylation. Retained in the endoplasmic reticulum rather than reaching the lysosome." evidence="12">
    <original>N</original>
    <variation>Q</variation>
    <location>
        <position position="130"/>
    </location>
</feature>
<feature type="mutagenesis site" description="Loss of glycosylation. Effectively transported to the lysosome." evidence="12">
    <original>N</original>
    <variation>Q</variation>
    <location>
        <position position="143"/>
    </location>
</feature>
<feature type="mutagenesis site" description="Loss of glycosylation. Effectively transported to the lysosome." evidence="12">
    <original>N</original>
    <variation>Q</variation>
    <location>
        <position position="178"/>
    </location>
</feature>
<feature type="mutagenesis site" description="Loss of glycosylation. Retained in the endoplasmic reticulum rather than reaching the lysosome." evidence="12">
    <original>N</original>
    <variation>Q</variation>
    <location>
        <position position="203"/>
    </location>
</feature>
<feature type="mutagenesis site" description="Significant decrease in bis(monoacylglycero)phosphate synthase and palmitoyl protein thioesterase activities. No alterations in secondary structure and thermal stability." evidence="15 16">
    <original>C</original>
    <variation>S</variation>
    <location>
        <position position="231"/>
    </location>
</feature>
<feature type="mutagenesis site" description="Loss of glycosylation. Retained in the endoplasmic reticulum rather than reaching the lysosome." evidence="12">
    <original>N</original>
    <variation>Q</variation>
    <location>
        <position position="255"/>
    </location>
</feature>
<feature type="mutagenesis site" description="Significant decrease in palmitoyl protein thioesterase activity." evidence="15">
    <original>I</original>
    <variation>S</variation>
    <location>
        <position position="259"/>
    </location>
</feature>
<feature type="mutagenesis site" description="Loss of glycosylation. Retained in the endoplasmic reticulum rather than reaching the lysosome." evidence="12">
    <original>N</original>
    <variation>Q</variation>
    <location>
        <position position="271"/>
    </location>
</feature>
<feature type="mutagenesis site" description="Loss of glycosylation. Partially retained in the endoplasmic reticulum." evidence="12">
    <original>N</original>
    <variation>Q</variation>
    <location>
        <position position="281"/>
    </location>
</feature>
<feature type="mutagenesis site" description="Weakens vesicular bis(monoacylglycero)phosphate binding. No alterations in secondary structure and thermal stability." evidence="16">
    <original>HK</original>
    <variation>EE</variation>
    <location>
        <begin position="318"/>
        <end position="319"/>
    </location>
</feature>
<feature type="mutagenesis site" description="Loss of glycosylation. Retained in the Golgi apparatus rather than reaching the lysosome." evidence="12">
    <original>N</original>
    <variation>Q</variation>
    <location>
        <position position="352"/>
    </location>
</feature>
<feature type="sequence conflict" description="In Ref. 2; BAG52069." evidence="19" ref="2">
    <original>Y</original>
    <variation>C</variation>
    <location>
        <position position="57"/>
    </location>
</feature>
<feature type="sequence conflict" description="In Ref. 2; BAG52069." evidence="19" ref="2">
    <original>I</original>
    <variation>T</variation>
    <location>
        <position position="92"/>
    </location>
</feature>